<protein>
    <recommendedName>
        <fullName>Putative adenylate cyclase regulatory protein</fullName>
    </recommendedName>
</protein>
<organism>
    <name type="scientific">Trypanosoma equiperdum</name>
    <dbReference type="NCBI Taxonomy" id="5694"/>
    <lineage>
        <taxon>Eukaryota</taxon>
        <taxon>Discoba</taxon>
        <taxon>Euglenozoa</taxon>
        <taxon>Kinetoplastea</taxon>
        <taxon>Metakinetoplastina</taxon>
        <taxon>Trypanosomatida</taxon>
        <taxon>Trypanosomatidae</taxon>
        <taxon>Trypanosoma</taxon>
    </lineage>
</organism>
<name>ESA8C_TRYEQ</name>
<accession>P26337</accession>
<reference key="1">
    <citation type="journal article" date="1991" name="EMBO J.">
        <title>The trypanosome VSG expression site encodes adenylate cyclase and a leucine-rich putative regulatory gene.</title>
        <authorList>
            <person name="Ross D.T."/>
            <person name="Raibaud A."/>
            <person name="Florent I.C."/>
            <person name="Sather S."/>
            <person name="Gross M.K."/>
            <person name="Storm D.R."/>
            <person name="Eisen H."/>
        </authorList>
    </citation>
    <scope>NUCLEOTIDE SEQUENCE [GENOMIC DNA]</scope>
    <source>
        <strain>CL</strain>
    </source>
</reference>
<proteinExistence type="evidence at transcript level"/>
<sequence length="630" mass="69990">MTGRSTYGMCAVCREPWAEGALELFPCRHVFCTVCVVERWRCPSCQRRIGGRRKANPHLLREIAEVTMELKRYRKGRSGIDVTQMARKLGGGGVTTSSEIFRRLEGSKNGRWKILNLSGCGSELQDLTALRDLEALEDLDLSECANLELRELMVVLTLRNLRKLRMKRTMVNDMWCSSIGLLKFLVHLEVDGSRGVTDITGLCRLKTLEALSLDSCINITKGFDKICALPQLTSLSLCQTNVTDKDLRCIHPDGKLKVLRYSSCHEITDLTAIGGMRSLEKLSLSGCWNVTKGLEELCKFSNLRELDISGCLVLGSAVVLKNLINLKVLSVSNCKNFKDLNGLERLVNLDKLNLSGCHGVSSLGFVANLSNLKELDISGCESLVCFDGLQDLNNLEVLYLRDVKSFTNVGAIKNLSKMRELDLSGCERITSLSGLETLKGLEELSLEGCGEIMSFDPIWSLHHLRVLYVSECGNLEDLSGLEGITGLEELYLHGCRKCTNFGPIWNLRNVCVVELSCCENLEDLSGLQCLTGLEELYLIGCEEITPIGVVGNLRNLKCLSTCWCANLKELGGLDRLVNLEKLDLSGCCGLSSSVFMELMSLPKLQWFYGFGSRVPDIVLEELKRRGVHIF</sequence>
<dbReference type="EMBL" id="X59385">
    <property type="protein sequence ID" value="CAA42028.1"/>
    <property type="molecule type" value="Genomic_DNA"/>
</dbReference>
<dbReference type="PIR" id="S16358">
    <property type="entry name" value="BWUT8Q"/>
</dbReference>
<dbReference type="SMR" id="P26337"/>
<dbReference type="VEuPathDB" id="TriTrypDB:TEOVI_000021700"/>
<dbReference type="GO" id="GO:0003677">
    <property type="term" value="F:DNA binding"/>
    <property type="evidence" value="ECO:0007669"/>
    <property type="project" value="UniProtKB-KW"/>
</dbReference>
<dbReference type="GO" id="GO:0008270">
    <property type="term" value="F:zinc ion binding"/>
    <property type="evidence" value="ECO:0007669"/>
    <property type="project" value="UniProtKB-KW"/>
</dbReference>
<dbReference type="GO" id="GO:0006171">
    <property type="term" value="P:cAMP biosynthetic process"/>
    <property type="evidence" value="ECO:0007669"/>
    <property type="project" value="UniProtKB-KW"/>
</dbReference>
<dbReference type="Gene3D" id="3.80.10.10">
    <property type="entry name" value="Ribonuclease Inhibitor"/>
    <property type="match status" value="3"/>
</dbReference>
<dbReference type="Gene3D" id="3.30.40.10">
    <property type="entry name" value="Zinc/RING finger domain, C3HC4 (zinc finger)"/>
    <property type="match status" value="1"/>
</dbReference>
<dbReference type="InterPro" id="IPR006553">
    <property type="entry name" value="Leu-rich_rpt_Cys-con_subtyp"/>
</dbReference>
<dbReference type="InterPro" id="IPR032675">
    <property type="entry name" value="LRR_dom_sf"/>
</dbReference>
<dbReference type="InterPro" id="IPR001841">
    <property type="entry name" value="Znf_RING"/>
</dbReference>
<dbReference type="InterPro" id="IPR013083">
    <property type="entry name" value="Znf_RING/FYVE/PHD"/>
</dbReference>
<dbReference type="InterPro" id="IPR017907">
    <property type="entry name" value="Znf_RING_CS"/>
</dbReference>
<dbReference type="InterPro" id="IPR051341">
    <property type="entry name" value="Zyg-11_UBL_adapter"/>
</dbReference>
<dbReference type="PANTHER" id="PTHR12904">
    <property type="match status" value="1"/>
</dbReference>
<dbReference type="PANTHER" id="PTHR12904:SF23">
    <property type="entry name" value="PROTEIN ZER-1 HOMOLOG"/>
    <property type="match status" value="1"/>
</dbReference>
<dbReference type="Pfam" id="PF23952">
    <property type="entry name" value="LRR_EndoS"/>
    <property type="match status" value="1"/>
</dbReference>
<dbReference type="SMART" id="SM00367">
    <property type="entry name" value="LRR_CC"/>
    <property type="match status" value="8"/>
</dbReference>
<dbReference type="SMART" id="SM00184">
    <property type="entry name" value="RING"/>
    <property type="match status" value="1"/>
</dbReference>
<dbReference type="SUPFAM" id="SSF52058">
    <property type="entry name" value="L domain-like"/>
    <property type="match status" value="2"/>
</dbReference>
<dbReference type="SUPFAM" id="SSF57850">
    <property type="entry name" value="RING/U-box"/>
    <property type="match status" value="1"/>
</dbReference>
<dbReference type="PROSITE" id="PS00518">
    <property type="entry name" value="ZF_RING_1"/>
    <property type="match status" value="1"/>
</dbReference>
<dbReference type="PROSITE" id="PS50089">
    <property type="entry name" value="ZF_RING_2"/>
    <property type="match status" value="1"/>
</dbReference>
<evidence type="ECO:0000255" key="1">
    <source>
        <dbReference type="PROSITE-ProRule" id="PRU00175"/>
    </source>
</evidence>
<comment type="function">
    <text>May interact with adenylate cyclase to regulate its activity.</text>
</comment>
<comment type="function">
    <text>May be involved in the postranscriptional regulation of genes in VSG expression sites.</text>
</comment>
<comment type="developmental stage">
    <text>Expressed only in the bloodstream form of the parasite.</text>
</comment>
<feature type="chain" id="PRO_0000056367" description="Putative adenylate cyclase regulatory protein">
    <location>
        <begin position="1"/>
        <end position="630"/>
    </location>
</feature>
<feature type="repeat" description="LRR 1">
    <location>
        <begin position="184"/>
        <end position="206"/>
    </location>
</feature>
<feature type="repeat" description="LRR 2">
    <location>
        <begin position="207"/>
        <end position="230"/>
    </location>
</feature>
<feature type="repeat" description="LRR 3">
    <location>
        <begin position="231"/>
        <end position="251"/>
    </location>
</feature>
<feature type="repeat" description="LRR 4">
    <location>
        <begin position="255"/>
        <end position="277"/>
    </location>
</feature>
<feature type="repeat" description="LRR 5">
    <location>
        <begin position="278"/>
        <end position="301"/>
    </location>
</feature>
<feature type="repeat" description="LRR 6">
    <location>
        <begin position="302"/>
        <end position="324"/>
    </location>
</feature>
<feature type="repeat" description="LRR 7">
    <location>
        <begin position="325"/>
        <end position="347"/>
    </location>
</feature>
<feature type="repeat" description="LRR 8">
    <location>
        <begin position="348"/>
        <end position="370"/>
    </location>
</feature>
<feature type="repeat" description="LRR 9">
    <location>
        <begin position="371"/>
        <end position="393"/>
    </location>
</feature>
<feature type="repeat" description="LRR 10">
    <location>
        <begin position="394"/>
        <end position="416"/>
    </location>
</feature>
<feature type="repeat" description="LRR 11">
    <location>
        <begin position="417"/>
        <end position="439"/>
    </location>
</feature>
<feature type="repeat" description="LRR 12">
    <location>
        <begin position="440"/>
        <end position="462"/>
    </location>
</feature>
<feature type="repeat" description="LRR 13">
    <location>
        <begin position="463"/>
        <end position="485"/>
    </location>
</feature>
<feature type="repeat" description="LRR 14">
    <location>
        <begin position="486"/>
        <end position="508"/>
    </location>
</feature>
<feature type="repeat" description="LRR 15">
    <location>
        <begin position="509"/>
        <end position="531"/>
    </location>
</feature>
<feature type="repeat" description="LRR 16">
    <location>
        <begin position="532"/>
        <end position="554"/>
    </location>
</feature>
<feature type="repeat" description="LRR 17">
    <location>
        <begin position="555"/>
        <end position="577"/>
    </location>
</feature>
<feature type="repeat" description="LRR 18">
    <location>
        <begin position="578"/>
        <end position="599"/>
    </location>
</feature>
<feature type="zinc finger region" description="RING-type" evidence="1">
    <location>
        <begin position="10"/>
        <end position="46"/>
    </location>
</feature>
<keyword id="KW-0115">cAMP biosynthesis</keyword>
<keyword id="KW-0238">DNA-binding</keyword>
<keyword id="KW-0433">Leucine-rich repeat</keyword>
<keyword id="KW-0479">Metal-binding</keyword>
<keyword id="KW-0677">Repeat</keyword>
<keyword id="KW-0862">Zinc</keyword>
<keyword id="KW-0863">Zinc-finger</keyword>
<gene>
    <name type="primary">ESAG8C</name>
</gene>